<name>INT5_MOUSE</name>
<accession>Q8CHT3</accession>
<accession>Q3TM44</accession>
<sequence>MSALCDPPGAPGPPGPAPATHGPAPLSAQELSQEIKAFLTGVDPILGHQLSAREHARCGLLLLRSLPPARAAVLDHLRGVFDESVRAHLAALEESPVAGPPHLRPPPPSHVPTGGPGLEDVVHEVQQVLCEFIRANPKAWAPVISAWSIDLMGQLSSTYSGQHQRVPHATGSLNELLQLWMGCRATRTLMDIYVQCLSALIGSCPDACVDALLDTSVQHSPHFDWVVAHIGSSFPGTIISRVLSCGLKDFCVHSGAGGGASACGNSSQPPSTDPFPGSPAIPGEKRVPKIASVVGILGHLASRHGDSIRRELLRMFHDSLAGGSGGRNGEPSLQATVPFLLQLAVMSPALLGTVSGELVDCLKPPAVLSQLQQHLQGFPREELDNMLNLAVHLVSQASGTGAYRLLQFLVDTAMPASVITTQGLAVPDTVREACDRLIQLLLLHLQKLVHHRGGSPGEGVLGPPPPPRPVPFLDALRNHVGELCGETLRLERKRFLWQHQLLGLLSVYTRPSCGPEALGHLLSRARSPEELSLATQLYAGLVVSLSGLLPLAFRSCLARVHAGTLQPPFTARFLRNLALLVGWEQQGGEGPSALGARFGESASAHLADLAPLLLHPEEEVAEAAASLLAICPFPSEALSPSQLLGLVRAGVHHFFSSLRLHGPPGVASASQLLTRLSQTSPAGLKAVLQLLVEGALHRGNTELFGGEMDGDNETLSIVSTPLASASLLDINRRHTAAVPGPGGIWSVFHAGVIGRGLKPPKIVQSRNHQEVIYNTQSLVSLLVHCCSASGNSEREGCWGAPTLSPEAAKAVAVTLVESVCPDAAGAELAWPPEDHARATVERDLRIGRRFREQPLLFELLKLVAAAPPALCYCSVLLRGLLAALLSHWEASRHPDTTHSPWHLEASCILVAVMAEGSLLPPALGNMHEVFSQLAPFEVRLLLLSVWGFLREHGPLPQKFIFQSERGRFIRDFAREGGAEGGPHLSVLHSVLHRNIDRLGLFSGRFQAPPPSTLLRQGT</sequence>
<reference key="1">
    <citation type="journal article" date="2005" name="Science">
        <title>The transcriptional landscape of the mammalian genome.</title>
        <authorList>
            <person name="Carninci P."/>
            <person name="Kasukawa T."/>
            <person name="Katayama S."/>
            <person name="Gough J."/>
            <person name="Frith M.C."/>
            <person name="Maeda N."/>
            <person name="Oyama R."/>
            <person name="Ravasi T."/>
            <person name="Lenhard B."/>
            <person name="Wells C."/>
            <person name="Kodzius R."/>
            <person name="Shimokawa K."/>
            <person name="Bajic V.B."/>
            <person name="Brenner S.E."/>
            <person name="Batalov S."/>
            <person name="Forrest A.R."/>
            <person name="Zavolan M."/>
            <person name="Davis M.J."/>
            <person name="Wilming L.G."/>
            <person name="Aidinis V."/>
            <person name="Allen J.E."/>
            <person name="Ambesi-Impiombato A."/>
            <person name="Apweiler R."/>
            <person name="Aturaliya R.N."/>
            <person name="Bailey T.L."/>
            <person name="Bansal M."/>
            <person name="Baxter L."/>
            <person name="Beisel K.W."/>
            <person name="Bersano T."/>
            <person name="Bono H."/>
            <person name="Chalk A.M."/>
            <person name="Chiu K.P."/>
            <person name="Choudhary V."/>
            <person name="Christoffels A."/>
            <person name="Clutterbuck D.R."/>
            <person name="Crowe M.L."/>
            <person name="Dalla E."/>
            <person name="Dalrymple B.P."/>
            <person name="de Bono B."/>
            <person name="Della Gatta G."/>
            <person name="di Bernardo D."/>
            <person name="Down T."/>
            <person name="Engstrom P."/>
            <person name="Fagiolini M."/>
            <person name="Faulkner G."/>
            <person name="Fletcher C.F."/>
            <person name="Fukushima T."/>
            <person name="Furuno M."/>
            <person name="Futaki S."/>
            <person name="Gariboldi M."/>
            <person name="Georgii-Hemming P."/>
            <person name="Gingeras T.R."/>
            <person name="Gojobori T."/>
            <person name="Green R.E."/>
            <person name="Gustincich S."/>
            <person name="Harbers M."/>
            <person name="Hayashi Y."/>
            <person name="Hensch T.K."/>
            <person name="Hirokawa N."/>
            <person name="Hill D."/>
            <person name="Huminiecki L."/>
            <person name="Iacono M."/>
            <person name="Ikeo K."/>
            <person name="Iwama A."/>
            <person name="Ishikawa T."/>
            <person name="Jakt M."/>
            <person name="Kanapin A."/>
            <person name="Katoh M."/>
            <person name="Kawasawa Y."/>
            <person name="Kelso J."/>
            <person name="Kitamura H."/>
            <person name="Kitano H."/>
            <person name="Kollias G."/>
            <person name="Krishnan S.P."/>
            <person name="Kruger A."/>
            <person name="Kummerfeld S.K."/>
            <person name="Kurochkin I.V."/>
            <person name="Lareau L.F."/>
            <person name="Lazarevic D."/>
            <person name="Lipovich L."/>
            <person name="Liu J."/>
            <person name="Liuni S."/>
            <person name="McWilliam S."/>
            <person name="Madan Babu M."/>
            <person name="Madera M."/>
            <person name="Marchionni L."/>
            <person name="Matsuda H."/>
            <person name="Matsuzawa S."/>
            <person name="Miki H."/>
            <person name="Mignone F."/>
            <person name="Miyake S."/>
            <person name="Morris K."/>
            <person name="Mottagui-Tabar S."/>
            <person name="Mulder N."/>
            <person name="Nakano N."/>
            <person name="Nakauchi H."/>
            <person name="Ng P."/>
            <person name="Nilsson R."/>
            <person name="Nishiguchi S."/>
            <person name="Nishikawa S."/>
            <person name="Nori F."/>
            <person name="Ohara O."/>
            <person name="Okazaki Y."/>
            <person name="Orlando V."/>
            <person name="Pang K.C."/>
            <person name="Pavan W.J."/>
            <person name="Pavesi G."/>
            <person name="Pesole G."/>
            <person name="Petrovsky N."/>
            <person name="Piazza S."/>
            <person name="Reed J."/>
            <person name="Reid J.F."/>
            <person name="Ring B.Z."/>
            <person name="Ringwald M."/>
            <person name="Rost B."/>
            <person name="Ruan Y."/>
            <person name="Salzberg S.L."/>
            <person name="Sandelin A."/>
            <person name="Schneider C."/>
            <person name="Schoenbach C."/>
            <person name="Sekiguchi K."/>
            <person name="Semple C.A."/>
            <person name="Seno S."/>
            <person name="Sessa L."/>
            <person name="Sheng Y."/>
            <person name="Shibata Y."/>
            <person name="Shimada H."/>
            <person name="Shimada K."/>
            <person name="Silva D."/>
            <person name="Sinclair B."/>
            <person name="Sperling S."/>
            <person name="Stupka E."/>
            <person name="Sugiura K."/>
            <person name="Sultana R."/>
            <person name="Takenaka Y."/>
            <person name="Taki K."/>
            <person name="Tammoja K."/>
            <person name="Tan S.L."/>
            <person name="Tang S."/>
            <person name="Taylor M.S."/>
            <person name="Tegner J."/>
            <person name="Teichmann S.A."/>
            <person name="Ueda H.R."/>
            <person name="van Nimwegen E."/>
            <person name="Verardo R."/>
            <person name="Wei C.L."/>
            <person name="Yagi K."/>
            <person name="Yamanishi H."/>
            <person name="Zabarovsky E."/>
            <person name="Zhu S."/>
            <person name="Zimmer A."/>
            <person name="Hide W."/>
            <person name="Bult C."/>
            <person name="Grimmond S.M."/>
            <person name="Teasdale R.D."/>
            <person name="Liu E.T."/>
            <person name="Brusic V."/>
            <person name="Quackenbush J."/>
            <person name="Wahlestedt C."/>
            <person name="Mattick J.S."/>
            <person name="Hume D.A."/>
            <person name="Kai C."/>
            <person name="Sasaki D."/>
            <person name="Tomaru Y."/>
            <person name="Fukuda S."/>
            <person name="Kanamori-Katayama M."/>
            <person name="Suzuki M."/>
            <person name="Aoki J."/>
            <person name="Arakawa T."/>
            <person name="Iida J."/>
            <person name="Imamura K."/>
            <person name="Itoh M."/>
            <person name="Kato T."/>
            <person name="Kawaji H."/>
            <person name="Kawagashira N."/>
            <person name="Kawashima T."/>
            <person name="Kojima M."/>
            <person name="Kondo S."/>
            <person name="Konno H."/>
            <person name="Nakano K."/>
            <person name="Ninomiya N."/>
            <person name="Nishio T."/>
            <person name="Okada M."/>
            <person name="Plessy C."/>
            <person name="Shibata K."/>
            <person name="Shiraki T."/>
            <person name="Suzuki S."/>
            <person name="Tagami M."/>
            <person name="Waki K."/>
            <person name="Watahiki A."/>
            <person name="Okamura-Oho Y."/>
            <person name="Suzuki H."/>
            <person name="Kawai J."/>
            <person name="Hayashizaki Y."/>
        </authorList>
    </citation>
    <scope>NUCLEOTIDE SEQUENCE [LARGE SCALE MRNA]</scope>
    <source>
        <strain>C57BL/6J</strain>
        <strain>NOD</strain>
        <tissue>Heart</tissue>
        <tissue>Lung</tissue>
    </source>
</reference>
<reference key="2">
    <citation type="journal article" date="2004" name="Genome Res.">
        <title>The status, quality, and expansion of the NIH full-length cDNA project: the Mammalian Gene Collection (MGC).</title>
        <authorList>
            <consortium name="The MGC Project Team"/>
        </authorList>
    </citation>
    <scope>NUCLEOTIDE SEQUENCE [LARGE SCALE MRNA]</scope>
    <source>
        <strain>FVB/N</strain>
        <tissue>Salivary gland</tissue>
    </source>
</reference>
<keyword id="KW-0007">Acetylation</keyword>
<keyword id="KW-0963">Cytoplasm</keyword>
<keyword id="KW-0472">Membrane</keyword>
<keyword id="KW-0539">Nucleus</keyword>
<keyword id="KW-0597">Phosphoprotein</keyword>
<keyword id="KW-1185">Reference proteome</keyword>
<keyword id="KW-0812">Transmembrane</keyword>
<keyword id="KW-1133">Transmembrane helix</keyword>
<dbReference type="EMBL" id="AK155499">
    <property type="protein sequence ID" value="BAE33294.1"/>
    <property type="molecule type" value="mRNA"/>
</dbReference>
<dbReference type="EMBL" id="AK166149">
    <property type="protein sequence ID" value="BAE38598.1"/>
    <property type="molecule type" value="mRNA"/>
</dbReference>
<dbReference type="EMBL" id="AK168795">
    <property type="protein sequence ID" value="BAE40628.1"/>
    <property type="molecule type" value="mRNA"/>
</dbReference>
<dbReference type="EMBL" id="AK170584">
    <property type="protein sequence ID" value="BAE41894.1"/>
    <property type="molecule type" value="mRNA"/>
</dbReference>
<dbReference type="EMBL" id="BC039214">
    <property type="protein sequence ID" value="AAH39214.1"/>
    <property type="molecule type" value="mRNA"/>
</dbReference>
<dbReference type="CCDS" id="CCDS29556.1"/>
<dbReference type="RefSeq" id="NP_789813.1">
    <property type="nucleotide sequence ID" value="NM_176843.3"/>
</dbReference>
<dbReference type="SMR" id="Q8CHT3"/>
<dbReference type="BioGRID" id="224544">
    <property type="interactions" value="5"/>
</dbReference>
<dbReference type="FunCoup" id="Q8CHT3">
    <property type="interactions" value="4810"/>
</dbReference>
<dbReference type="STRING" id="10090.ENSMUSP00000093968"/>
<dbReference type="iPTMnet" id="Q8CHT3"/>
<dbReference type="PhosphoSitePlus" id="Q8CHT3"/>
<dbReference type="SwissPalm" id="Q8CHT3"/>
<dbReference type="PaxDb" id="10090-ENSMUSP00000093968"/>
<dbReference type="PeptideAtlas" id="Q8CHT3"/>
<dbReference type="ProteomicsDB" id="269069"/>
<dbReference type="Pumba" id="Q8CHT3"/>
<dbReference type="Antibodypedia" id="28628">
    <property type="antibodies" value="94 antibodies from 21 providers"/>
</dbReference>
<dbReference type="DNASU" id="109077"/>
<dbReference type="Ensembl" id="ENSMUST00000096249.7">
    <property type="protein sequence ID" value="ENSMUSP00000093968.6"/>
    <property type="gene ID" value="ENSMUSG00000071652.9"/>
</dbReference>
<dbReference type="GeneID" id="109077"/>
<dbReference type="KEGG" id="mmu:109077"/>
<dbReference type="UCSC" id="uc008gnu.2">
    <property type="organism name" value="mouse"/>
</dbReference>
<dbReference type="AGR" id="MGI:1923578"/>
<dbReference type="CTD" id="80789"/>
<dbReference type="MGI" id="MGI:1923578">
    <property type="gene designation" value="Ints5"/>
</dbReference>
<dbReference type="VEuPathDB" id="HostDB:ENSMUSG00000071652"/>
<dbReference type="eggNOG" id="ENOG502QPVK">
    <property type="taxonomic scope" value="Eukaryota"/>
</dbReference>
<dbReference type="GeneTree" id="ENSGT00390000008374"/>
<dbReference type="HOGENOM" id="CLU_013732_0_0_1"/>
<dbReference type="InParanoid" id="Q8CHT3"/>
<dbReference type="OMA" id="KDFCVHS"/>
<dbReference type="OrthoDB" id="69088at2759"/>
<dbReference type="PhylomeDB" id="Q8CHT3"/>
<dbReference type="TreeFam" id="TF323720"/>
<dbReference type="Reactome" id="R-MMU-6807505">
    <property type="pathway name" value="RNA polymerase II transcribes snRNA genes"/>
</dbReference>
<dbReference type="BioGRID-ORCS" id="109077">
    <property type="hits" value="23 hits in 77 CRISPR screens"/>
</dbReference>
<dbReference type="ChiTaRS" id="Ints5">
    <property type="organism name" value="mouse"/>
</dbReference>
<dbReference type="PRO" id="PR:Q8CHT3"/>
<dbReference type="Proteomes" id="UP000000589">
    <property type="component" value="Chromosome 19"/>
</dbReference>
<dbReference type="RNAct" id="Q8CHT3">
    <property type="molecule type" value="protein"/>
</dbReference>
<dbReference type="Bgee" id="ENSMUSG00000071652">
    <property type="expression patterns" value="Expressed in dorsal pancreas and 263 other cell types or tissues"/>
</dbReference>
<dbReference type="GO" id="GO:0005737">
    <property type="term" value="C:cytoplasm"/>
    <property type="evidence" value="ECO:0000250"/>
    <property type="project" value="UniProtKB"/>
</dbReference>
<dbReference type="GO" id="GO:0005829">
    <property type="term" value="C:cytosol"/>
    <property type="evidence" value="ECO:0007669"/>
    <property type="project" value="Ensembl"/>
</dbReference>
<dbReference type="GO" id="GO:0160232">
    <property type="term" value="C:INTAC complex"/>
    <property type="evidence" value="ECO:0000250"/>
    <property type="project" value="UniProtKB"/>
</dbReference>
<dbReference type="GO" id="GO:0032039">
    <property type="term" value="C:integrator complex"/>
    <property type="evidence" value="ECO:0000250"/>
    <property type="project" value="HGNC-UCL"/>
</dbReference>
<dbReference type="GO" id="GO:0031965">
    <property type="term" value="C:nuclear membrane"/>
    <property type="evidence" value="ECO:0007669"/>
    <property type="project" value="UniProtKB-SubCell"/>
</dbReference>
<dbReference type="GO" id="GO:0005654">
    <property type="term" value="C:nucleoplasm"/>
    <property type="evidence" value="ECO:0007669"/>
    <property type="project" value="Ensembl"/>
</dbReference>
<dbReference type="GO" id="GO:0005634">
    <property type="term" value="C:nucleus"/>
    <property type="evidence" value="ECO:0000250"/>
    <property type="project" value="UniProtKB"/>
</dbReference>
<dbReference type="GO" id="GO:0160240">
    <property type="term" value="P:RNA polymerase II transcription initiation surveillance"/>
    <property type="evidence" value="ECO:0000250"/>
    <property type="project" value="UniProtKB"/>
</dbReference>
<dbReference type="GO" id="GO:0016180">
    <property type="term" value="P:snRNA processing"/>
    <property type="evidence" value="ECO:0000250"/>
    <property type="project" value="HGNC-UCL"/>
</dbReference>
<dbReference type="InterPro" id="IPR040316">
    <property type="entry name" value="INTS5"/>
</dbReference>
<dbReference type="InterPro" id="IPR029444">
    <property type="entry name" value="INTS5_C"/>
</dbReference>
<dbReference type="InterPro" id="IPR029445">
    <property type="entry name" value="INTS5_N"/>
</dbReference>
<dbReference type="PANTHER" id="PTHR31697">
    <property type="entry name" value="INTEGRATOR COMPLEX SUBUNIT 5"/>
    <property type="match status" value="1"/>
</dbReference>
<dbReference type="PANTHER" id="PTHR31697:SF2">
    <property type="entry name" value="INTEGRATOR COMPLEX SUBUNIT 5"/>
    <property type="match status" value="1"/>
</dbReference>
<dbReference type="Pfam" id="PF14838">
    <property type="entry name" value="INTS5_C"/>
    <property type="match status" value="1"/>
</dbReference>
<dbReference type="Pfam" id="PF14837">
    <property type="entry name" value="INTS5_N"/>
    <property type="match status" value="1"/>
</dbReference>
<proteinExistence type="evidence at transcript level"/>
<feature type="initiator methionine" description="Removed" evidence="1">
    <location>
        <position position="1"/>
    </location>
</feature>
<feature type="chain" id="PRO_0000259542" description="Integrator complex subunit 5">
    <location>
        <begin position="2"/>
        <end position="1018"/>
    </location>
</feature>
<feature type="transmembrane region" description="Helical" evidence="2">
    <location>
        <begin position="533"/>
        <end position="553"/>
    </location>
</feature>
<feature type="transmembrane region" description="Helical" evidence="2">
    <location>
        <begin position="855"/>
        <end position="875"/>
    </location>
</feature>
<feature type="transmembrane region" description="Helical" evidence="2">
    <location>
        <begin position="929"/>
        <end position="949"/>
    </location>
</feature>
<feature type="region of interest" description="Disordered" evidence="3">
    <location>
        <begin position="1"/>
        <end position="26"/>
    </location>
</feature>
<feature type="compositionally biased region" description="Pro residues" evidence="3">
    <location>
        <begin position="8"/>
        <end position="17"/>
    </location>
</feature>
<feature type="modified residue" description="N-acetylserine" evidence="1">
    <location>
        <position position="2"/>
    </location>
</feature>
<feature type="modified residue" description="Phosphoserine" evidence="1">
    <location>
        <position position="278"/>
    </location>
</feature>
<feature type="sequence conflict" description="In Ref. 1; BAE38598." evidence="4" ref="1">
    <original>P</original>
    <variation>H</variation>
    <location>
        <position position="276"/>
    </location>
</feature>
<feature type="sequence conflict" description="In Ref. 1; BAE38598." evidence="4" ref="1">
    <original>R</original>
    <variation>K</variation>
    <location>
        <position position="648"/>
    </location>
</feature>
<comment type="function">
    <text evidence="1">Component of the integrator complex, a multiprotein complex that terminates RNA polymerase II (Pol II) transcription in the promoter-proximal region of genes. The integrator complex provides a quality checkpoint during transcription elongation by driving premature transcription termination of transcripts that are unfavorably configured for transcriptional elongation: the complex terminates transcription by (1) catalyzing dephosphorylation of the C-terminal domain (CTD) of Pol II subunit POLR2A/RPB1 and SUPT5H/SPT5, (2) degrading the exiting nascent RNA transcript via endonuclease activity and (3) promoting the release of Pol II from bound DNA. The integrator complex is also involved in terminating the synthesis of non-coding Pol II transcripts, such as enhancer RNAs (eRNAs), small nuclear RNAs (snRNAs), telomerase RNAs and long non-coding RNAs (lncRNAs). Mediates recruitment of cytoplasmic dynein to the nuclear envelope, probably as component of the integrator complex.</text>
</comment>
<comment type="subunit">
    <text evidence="1">Component of the Integrator complex, composed of core subunits INTS1, INTS2, INTS3, INTS4, INTS5, INTS6, INTS7, INTS8, INTS9/RC74, INTS10, INTS11/CPSF3L, INTS12, INTS13, INTS14 and INTS15. The core complex associates with protein phosphatase 2A subunits PPP2CA and PPP2R1A, to form the Integrator-PP2A (INTAC) complex.</text>
</comment>
<comment type="subcellular location">
    <subcellularLocation>
        <location evidence="1">Nucleus</location>
    </subcellularLocation>
    <subcellularLocation>
        <location evidence="1">Cytoplasm</location>
    </subcellularLocation>
    <subcellularLocation>
        <location evidence="1">Nucleus membrane</location>
        <topology evidence="2">Multi-pass membrane protein</topology>
    </subcellularLocation>
</comment>
<comment type="similarity">
    <text evidence="4">Belongs to the Integrator subunit 5 family.</text>
</comment>
<protein>
    <recommendedName>
        <fullName>Integrator complex subunit 5</fullName>
        <shortName>Int5</shortName>
    </recommendedName>
</protein>
<evidence type="ECO:0000250" key="1">
    <source>
        <dbReference type="UniProtKB" id="Q6P9B9"/>
    </source>
</evidence>
<evidence type="ECO:0000255" key="2"/>
<evidence type="ECO:0000256" key="3">
    <source>
        <dbReference type="SAM" id="MobiDB-lite"/>
    </source>
</evidence>
<evidence type="ECO:0000305" key="4"/>
<organism>
    <name type="scientific">Mus musculus</name>
    <name type="common">Mouse</name>
    <dbReference type="NCBI Taxonomy" id="10090"/>
    <lineage>
        <taxon>Eukaryota</taxon>
        <taxon>Metazoa</taxon>
        <taxon>Chordata</taxon>
        <taxon>Craniata</taxon>
        <taxon>Vertebrata</taxon>
        <taxon>Euteleostomi</taxon>
        <taxon>Mammalia</taxon>
        <taxon>Eutheria</taxon>
        <taxon>Euarchontoglires</taxon>
        <taxon>Glires</taxon>
        <taxon>Rodentia</taxon>
        <taxon>Myomorpha</taxon>
        <taxon>Muroidea</taxon>
        <taxon>Muridae</taxon>
        <taxon>Murinae</taxon>
        <taxon>Mus</taxon>
        <taxon>Mus</taxon>
    </lineage>
</organism>
<gene>
    <name type="primary">Ints5</name>
</gene>